<keyword id="KW-1185">Reference proteome</keyword>
<name>YO04_BPL2</name>
<sequence length="161" mass="18225">MQENAMEAANWALTIFFYGLSWFIAVGSIMILWPVWEYLKKKAHEQKLKGEEIIVAQAMTEQKLTIDFLREEAAVKELERLKAESLEIKERNAVEIDGIDYQGLTTIELKAKAKELGITGISRRSKNQLIEDIKQALIEQAVETENVVLNDDAHAHAVASV</sequence>
<dbReference type="EMBL" id="L13696">
    <property type="protein sequence ID" value="AAA87960.1"/>
    <property type="molecule type" value="Genomic_DNA"/>
</dbReference>
<dbReference type="RefSeq" id="NP_040812.1">
    <property type="nucleotide sequence ID" value="NC_001447.1"/>
</dbReference>
<dbReference type="GeneID" id="1261018"/>
<dbReference type="KEGG" id="vg:1261018"/>
<dbReference type="Proteomes" id="UP000001573">
    <property type="component" value="Genome"/>
</dbReference>
<dbReference type="GO" id="GO:0006353">
    <property type="term" value="P:DNA-templated transcription termination"/>
    <property type="evidence" value="ECO:0007669"/>
    <property type="project" value="InterPro"/>
</dbReference>
<dbReference type="InterPro" id="IPR011112">
    <property type="entry name" value="Rho-like_N"/>
</dbReference>
<dbReference type="Pfam" id="PF07498">
    <property type="entry name" value="Rho_N"/>
    <property type="match status" value="1"/>
</dbReference>
<dbReference type="SMART" id="SM00959">
    <property type="entry name" value="Rho_N"/>
    <property type="match status" value="1"/>
</dbReference>
<reference key="1">
    <citation type="journal article" date="1994" name="Gene">
        <title>Sequence analysis of a unique temperature phage: mycoplasma virus L2.</title>
        <authorList>
            <person name="Maniloff J."/>
            <person name="Kampo G.J."/>
            <person name="Dascher C.C."/>
        </authorList>
    </citation>
    <scope>NUCLEOTIDE SEQUENCE [LARGE SCALE GENOMIC DNA]</scope>
</reference>
<accession>P42539</accession>
<organismHost>
    <name type="scientific">Mycoplasma</name>
    <dbReference type="NCBI Taxonomy" id="2093"/>
</organismHost>
<protein>
    <recommendedName>
        <fullName>Uncharacterized 18.2 kDa protein</fullName>
    </recommendedName>
    <alternativeName>
        <fullName>ORF4</fullName>
    </alternativeName>
</protein>
<feature type="chain" id="PRO_0000066351" description="Uncharacterized 18.2 kDa protein">
    <location>
        <begin position="1"/>
        <end position="161"/>
    </location>
</feature>
<proteinExistence type="predicted"/>
<organism>
    <name type="scientific">Acholeplasma phage L2</name>
    <name type="common">Bacteriophage L2</name>
    <dbReference type="NCBI Taxonomy" id="46014"/>
    <lineage>
        <taxon>Viruses</taxon>
        <taxon>Viruses incertae sedis</taxon>
        <taxon>Plasmaviridae</taxon>
        <taxon>Plasmavirus</taxon>
    </lineage>
</organism>